<reference key="1">
    <citation type="journal article" date="2009" name="BMC Genomics">
        <title>Characterization of full-length sequenced cDNA inserts (FLIcs) from Atlantic salmon (Salmo salar).</title>
        <authorList>
            <person name="Andreassen R."/>
            <person name="Lunner S."/>
            <person name="Hoyheim B."/>
        </authorList>
    </citation>
    <scope>NUCLEOTIDE SEQUENCE [LARGE SCALE MRNA]</scope>
    <source>
        <tissue>White muscle</tissue>
    </source>
</reference>
<reference key="2">
    <citation type="journal article" date="2010" name="BMC Genomics">
        <title>Salmo salar and Esox lucius full-length cDNA sequences reveal changes in evolutionary pressures on a post-tetraploidization genome.</title>
        <authorList>
            <person name="Leong J.S."/>
            <person name="Jantzen S.G."/>
            <person name="von Schalburg K.R."/>
            <person name="Cooper G.A."/>
            <person name="Messmer A.M."/>
            <person name="Liao N.Y."/>
            <person name="Munro S."/>
            <person name="Moore R."/>
            <person name="Holt R.A."/>
            <person name="Jones S.J."/>
            <person name="Davidson W.S."/>
            <person name="Koop B.F."/>
        </authorList>
    </citation>
    <scope>NUCLEOTIDE SEQUENCE [LARGE SCALE MRNA]</scope>
    <source>
        <tissue>Spleen</tissue>
    </source>
</reference>
<protein>
    <recommendedName>
        <fullName evidence="1">Anamorsin-A</fullName>
    </recommendedName>
    <alternativeName>
        <fullName evidence="1">Cytokine-induced apoptosis inhibitor 1-A</fullName>
    </alternativeName>
    <alternativeName>
        <fullName evidence="1">Fe-S cluster assembly protein DRE2 homolog A</fullName>
    </alternativeName>
</protein>
<feature type="chain" id="PRO_0000392304" description="Anamorsin-A">
    <location>
        <begin position="1"/>
        <end position="313"/>
    </location>
</feature>
<feature type="region of interest" description="N-terminal SAM-like domain" evidence="1">
    <location>
        <begin position="6"/>
        <end position="170"/>
    </location>
</feature>
<feature type="region of interest" description="Linker" evidence="1">
    <location>
        <begin position="171"/>
        <end position="223"/>
    </location>
</feature>
<feature type="region of interest" description="Fe-S binding site A" evidence="1">
    <location>
        <begin position="236"/>
        <end position="252"/>
    </location>
</feature>
<feature type="region of interest" description="Fe-S binding site B" evidence="1">
    <location>
        <begin position="275"/>
        <end position="289"/>
    </location>
</feature>
<feature type="short sequence motif" description="Cx2C motif 1" evidence="1">
    <location>
        <begin position="275"/>
        <end position="278"/>
    </location>
</feature>
<feature type="short sequence motif" description="Cx2C motif 2" evidence="1">
    <location>
        <begin position="286"/>
        <end position="289"/>
    </location>
</feature>
<feature type="binding site" evidence="1">
    <location>
        <position position="236"/>
    </location>
    <ligand>
        <name>[2Fe-2S] cluster</name>
        <dbReference type="ChEBI" id="CHEBI:190135"/>
    </ligand>
</feature>
<feature type="binding site" evidence="1">
    <location>
        <position position="247"/>
    </location>
    <ligand>
        <name>[2Fe-2S] cluster</name>
        <dbReference type="ChEBI" id="CHEBI:190135"/>
    </ligand>
</feature>
<feature type="binding site" evidence="1">
    <location>
        <position position="250"/>
    </location>
    <ligand>
        <name>[2Fe-2S] cluster</name>
        <dbReference type="ChEBI" id="CHEBI:190135"/>
    </ligand>
</feature>
<feature type="binding site" evidence="1">
    <location>
        <position position="252"/>
    </location>
    <ligand>
        <name>[2Fe-2S] cluster</name>
        <dbReference type="ChEBI" id="CHEBI:190135"/>
    </ligand>
</feature>
<feature type="binding site" evidence="1">
    <location>
        <position position="275"/>
    </location>
    <ligand>
        <name>[4Fe-4S] cluster</name>
        <dbReference type="ChEBI" id="CHEBI:49883"/>
    </ligand>
</feature>
<feature type="binding site" evidence="1">
    <location>
        <position position="278"/>
    </location>
    <ligand>
        <name>[4Fe-4S] cluster</name>
        <dbReference type="ChEBI" id="CHEBI:49883"/>
    </ligand>
</feature>
<feature type="binding site" evidence="1">
    <location>
        <position position="286"/>
    </location>
    <ligand>
        <name>[4Fe-4S] cluster</name>
        <dbReference type="ChEBI" id="CHEBI:49883"/>
    </ligand>
</feature>
<feature type="binding site" evidence="1">
    <location>
        <position position="289"/>
    </location>
    <ligand>
        <name>[4Fe-4S] cluster</name>
        <dbReference type="ChEBI" id="CHEBI:49883"/>
    </ligand>
</feature>
<feature type="sequence conflict" description="In Ref. 2; ACH70653." evidence="2" ref="2">
    <location>
        <position position="184"/>
    </location>
</feature>
<comment type="function">
    <text evidence="1">Component of the cytosolic iron-sulfur (Fe-S) protein assembly (CIA) machinery required for the maturation of extramitochondrial Fe-S proteins. Part of an electron transfer chain functioning in an early step of cytosolic Fe-S biogenesis, facilitating the de novo assembly of a [4Fe-4S] cluster on the scaffold complex NUBP1-NUBP2. Electrons are transferred to CIAPIN1 from NADPH via the FAD- and FMN-containing protein NDOR1. NDOR1-CIAPIN1 are also required for the assembly of the diferric tyrosyl radical cofactor of ribonucleotide reductase (RNR), probably by providing electrons for reduction during radical cofactor maturation in the catalytic small subunit. Has anti-apoptotic effects in the cell. Involved in negative control of cell death upon cytokine withdrawal. Promotes development of hematopoietic cells.</text>
</comment>
<comment type="cofactor">
    <cofactor evidence="1">
        <name>[2Fe-2S] cluster</name>
        <dbReference type="ChEBI" id="CHEBI:190135"/>
    </cofactor>
</comment>
<comment type="cofactor">
    <cofactor evidence="1">
        <name>[4Fe-4S] cluster</name>
        <dbReference type="ChEBI" id="CHEBI:49883"/>
    </cofactor>
</comment>
<comment type="subunit">
    <text evidence="1">Monomer. Interacts with ndor1. Interacts with chchd4.</text>
</comment>
<comment type="subcellular location">
    <subcellularLocation>
        <location evidence="1">Cytoplasm</location>
    </subcellularLocation>
    <subcellularLocation>
        <location evidence="1">Nucleus</location>
    </subcellularLocation>
    <subcellularLocation>
        <location evidence="1">Mitochondrion intermembrane space</location>
    </subcellularLocation>
</comment>
<comment type="domain">
    <text evidence="1">The twin Cx2C motifs are involved in the recognition by the mitochondrial CHCHD4/MIA40-GFER/ERV1 disulfide relay system. The formation of 2 disulfide bonds in the Cx2C motifs through dithiol/disulfide exchange reactions effectively traps the protein in the mitochondrial intermembrane space.</text>
</comment>
<comment type="domain">
    <text evidence="1">The C-terminal domain binds 2 Fe-S clusters but is otherwise mostly in an intrinsically disordered conformation.</text>
</comment>
<comment type="domain">
    <text evidence="1">The N-terminal domain has structural similarity with S-adenosyl-L-methionine-dependent methyltransferases, but does not bind S-adenosyl-L-methionine. It is required for correct assembly of the 2 Fe-S clusters.</text>
</comment>
<comment type="similarity">
    <text evidence="1">Belongs to the anamorsin family.</text>
</comment>
<proteinExistence type="evidence at transcript level"/>
<organism>
    <name type="scientific">Salmo salar</name>
    <name type="common">Atlantic salmon</name>
    <dbReference type="NCBI Taxonomy" id="8030"/>
    <lineage>
        <taxon>Eukaryota</taxon>
        <taxon>Metazoa</taxon>
        <taxon>Chordata</taxon>
        <taxon>Craniata</taxon>
        <taxon>Vertebrata</taxon>
        <taxon>Euteleostomi</taxon>
        <taxon>Actinopterygii</taxon>
        <taxon>Neopterygii</taxon>
        <taxon>Teleostei</taxon>
        <taxon>Protacanthopterygii</taxon>
        <taxon>Salmoniformes</taxon>
        <taxon>Salmonidae</taxon>
        <taxon>Salmoninae</taxon>
        <taxon>Salmo</taxon>
    </lineage>
</organism>
<dbReference type="EMBL" id="BT043538">
    <property type="protein sequence ID" value="ACH70653.1"/>
    <property type="molecule type" value="mRNA"/>
</dbReference>
<dbReference type="EMBL" id="BT049590">
    <property type="protein sequence ID" value="ACI69391.1"/>
    <property type="molecule type" value="mRNA"/>
</dbReference>
<dbReference type="RefSeq" id="XP_014004382.1">
    <property type="nucleotide sequence ID" value="XM_014148907.1"/>
</dbReference>
<dbReference type="RefSeq" id="XP_014004383.1">
    <property type="nucleotide sequence ID" value="XM_014148908.1"/>
</dbReference>
<dbReference type="RefSeq" id="XP_014004387.1">
    <property type="nucleotide sequence ID" value="XM_014148912.1"/>
</dbReference>
<dbReference type="SMR" id="B5XEX1"/>
<dbReference type="STRING" id="8030.ENSSSAP00000035114"/>
<dbReference type="PaxDb" id="8030-ENSSSAP00000035114"/>
<dbReference type="Ensembl" id="ENSSSAT00020188343">
    <property type="protein sequence ID" value="ENSSSAP00020142462"/>
    <property type="gene ID" value="ENSSSAG00020079229"/>
</dbReference>
<dbReference type="Ensembl" id="ENSSSAT00075100758">
    <property type="protein sequence ID" value="ENSSSAP00075073994"/>
    <property type="gene ID" value="ENSSSAG00075047929"/>
</dbReference>
<dbReference type="GeneID" id="106573658"/>
<dbReference type="KEGG" id="sasa:106573658"/>
<dbReference type="CTD" id="57019"/>
<dbReference type="Proteomes" id="UP000087266">
    <property type="component" value="Chromosome ssa16"/>
</dbReference>
<dbReference type="Bgee" id="ENSSSAG00000041949">
    <property type="expression patterns" value="Expressed in notochord and 24 other cell types or tissues"/>
</dbReference>
<dbReference type="GO" id="GO:0005758">
    <property type="term" value="C:mitochondrial intermembrane space"/>
    <property type="evidence" value="ECO:0007669"/>
    <property type="project" value="UniProtKB-SubCell"/>
</dbReference>
<dbReference type="GO" id="GO:0005634">
    <property type="term" value="C:nucleus"/>
    <property type="evidence" value="ECO:0007669"/>
    <property type="project" value="UniProtKB-SubCell"/>
</dbReference>
<dbReference type="GO" id="GO:0051537">
    <property type="term" value="F:2 iron, 2 sulfur cluster binding"/>
    <property type="evidence" value="ECO:0000250"/>
    <property type="project" value="UniProtKB"/>
</dbReference>
<dbReference type="GO" id="GO:0051539">
    <property type="term" value="F:4 iron, 4 sulfur cluster binding"/>
    <property type="evidence" value="ECO:0007669"/>
    <property type="project" value="UniProtKB-KW"/>
</dbReference>
<dbReference type="GO" id="GO:0009055">
    <property type="term" value="F:electron transfer activity"/>
    <property type="evidence" value="ECO:0007669"/>
    <property type="project" value="UniProtKB-UniRule"/>
</dbReference>
<dbReference type="GO" id="GO:0046872">
    <property type="term" value="F:metal ion binding"/>
    <property type="evidence" value="ECO:0007669"/>
    <property type="project" value="UniProtKB-KW"/>
</dbReference>
<dbReference type="GO" id="GO:0006915">
    <property type="term" value="P:apoptotic process"/>
    <property type="evidence" value="ECO:0007669"/>
    <property type="project" value="UniProtKB-KW"/>
</dbReference>
<dbReference type="GO" id="GO:0030097">
    <property type="term" value="P:hemopoiesis"/>
    <property type="evidence" value="ECO:0007669"/>
    <property type="project" value="UniProtKB-UniRule"/>
</dbReference>
<dbReference type="GO" id="GO:0016226">
    <property type="term" value="P:iron-sulfur cluster assembly"/>
    <property type="evidence" value="ECO:0007669"/>
    <property type="project" value="UniProtKB-UniRule"/>
</dbReference>
<dbReference type="GO" id="GO:0043066">
    <property type="term" value="P:negative regulation of apoptotic process"/>
    <property type="evidence" value="ECO:0007669"/>
    <property type="project" value="UniProtKB-UniRule"/>
</dbReference>
<dbReference type="FunFam" id="3.40.50.150:FF:000085">
    <property type="entry name" value="Anamorsin homolog"/>
    <property type="match status" value="1"/>
</dbReference>
<dbReference type="Gene3D" id="3.40.50.150">
    <property type="entry name" value="Vaccinia Virus protein VP39"/>
    <property type="match status" value="1"/>
</dbReference>
<dbReference type="HAMAP" id="MF_03115">
    <property type="entry name" value="Anamorsin"/>
    <property type="match status" value="1"/>
</dbReference>
<dbReference type="InterPro" id="IPR007785">
    <property type="entry name" value="Anamorsin"/>
</dbReference>
<dbReference type="InterPro" id="IPR049011">
    <property type="entry name" value="Anamorsin_N_metazoan"/>
</dbReference>
<dbReference type="InterPro" id="IPR046408">
    <property type="entry name" value="CIAPIN1"/>
</dbReference>
<dbReference type="InterPro" id="IPR029063">
    <property type="entry name" value="SAM-dependent_MTases_sf"/>
</dbReference>
<dbReference type="PANTHER" id="PTHR13273">
    <property type="entry name" value="ANAMORSIN"/>
    <property type="match status" value="1"/>
</dbReference>
<dbReference type="PANTHER" id="PTHR13273:SF14">
    <property type="entry name" value="ANAMORSIN"/>
    <property type="match status" value="1"/>
</dbReference>
<dbReference type="Pfam" id="PF20922">
    <property type="entry name" value="Anamorsin_N"/>
    <property type="match status" value="1"/>
</dbReference>
<dbReference type="Pfam" id="PF05093">
    <property type="entry name" value="CIAPIN1"/>
    <property type="match status" value="2"/>
</dbReference>
<dbReference type="SUPFAM" id="SSF53335">
    <property type="entry name" value="S-adenosyl-L-methionine-dependent methyltransferases"/>
    <property type="match status" value="1"/>
</dbReference>
<keyword id="KW-0001">2Fe-2S</keyword>
<keyword id="KW-0004">4Fe-4S</keyword>
<keyword id="KW-0053">Apoptosis</keyword>
<keyword id="KW-0963">Cytoplasm</keyword>
<keyword id="KW-0408">Iron</keyword>
<keyword id="KW-0411">Iron-sulfur</keyword>
<keyword id="KW-0479">Metal-binding</keyword>
<keyword id="KW-0496">Mitochondrion</keyword>
<keyword id="KW-0539">Nucleus</keyword>
<keyword id="KW-1185">Reference proteome</keyword>
<sequence>MADLGVKAGDKVLLVWSQPSSPTTLKKLAESLGAMVGTDGRVSLENMERLIMSSHAASSYDWVLSSLLSDSFSVHTSETLAEMARVIKPDGKLVLEEPVTGTDDQKVRTAEKLISALKLSGLVSVTEVSKEPLTPEAVSALKTFTGFQGNTLSRVRMSASKPNFEVGSSSQLKFSFGKKTSKPVDKPALDPNAAKAWTLSANDMDDDDVDLVDSDALLDADDFKKPDAASLKAPSCGDGTTKKKKACKNCSCGLAEELEQESKGAKTISQPKSACGSCYLGDAFRCASCPYIGMPAFKPGEKIVLANTGLNDT</sequence>
<gene>
    <name evidence="1" type="primary">ciapin1-A</name>
    <name type="synonym">ciapin1-1</name>
</gene>
<evidence type="ECO:0000255" key="1">
    <source>
        <dbReference type="HAMAP-Rule" id="MF_03115"/>
    </source>
</evidence>
<evidence type="ECO:0000305" key="2"/>
<name>CPN1A_SALSA</name>
<accession>B5XEX1</accession>
<accession>B5DFX9</accession>